<keyword id="KW-0143">Chaperone</keyword>
<keyword id="KW-0963">Cytoplasm</keyword>
<keyword id="KW-0690">Ribosome biogenesis</keyword>
<keyword id="KW-0698">rRNA processing</keyword>
<comment type="function">
    <text evidence="1">An accessory protein needed during the final step in the assembly of 30S ribosomal subunit, possibly for assembly of the head region. Essential for efficient processing of 16S rRNA. May be needed both before and after RbfA during the maturation of 16S rRNA. It has affinity for free ribosomal 30S subunits but not for 70S ribosomes.</text>
</comment>
<comment type="subunit">
    <text evidence="1">Binds ribosomal protein uS19.</text>
</comment>
<comment type="subcellular location">
    <subcellularLocation>
        <location evidence="1">Cytoplasm</location>
    </subcellularLocation>
</comment>
<comment type="domain">
    <text evidence="1">The PRC barrel domain binds ribosomal protein uS19.</text>
</comment>
<comment type="similarity">
    <text evidence="1">Belongs to the RimM family.</text>
</comment>
<organism>
    <name type="scientific">Mycobacterium avium (strain 104)</name>
    <dbReference type="NCBI Taxonomy" id="243243"/>
    <lineage>
        <taxon>Bacteria</taxon>
        <taxon>Bacillati</taxon>
        <taxon>Actinomycetota</taxon>
        <taxon>Actinomycetes</taxon>
        <taxon>Mycobacteriales</taxon>
        <taxon>Mycobacteriaceae</taxon>
        <taxon>Mycobacterium</taxon>
        <taxon>Mycobacterium avium complex (MAC)</taxon>
    </lineage>
</organism>
<proteinExistence type="inferred from homology"/>
<sequence length="175" mass="18495">MELTVGRVVKAHGISGEIVVEIRTDDPAARFAPGNTLRAKPSRGGPERSCVIESAREHGGRLLVRLAGVTDRDAADALRGTLFVVDSAELPDIDEPDTYYDHQLEGLQVRTTGGQRVGAVAEVLHTAAGELLAVRDDADGAPREVLVPFVSAIVTAVSLDDGLIEIDPPDGLLDL</sequence>
<gene>
    <name evidence="1" type="primary">rimM</name>
    <name type="ordered locus">MAV_3762</name>
</gene>
<reference key="1">
    <citation type="submission" date="2006-10" db="EMBL/GenBank/DDBJ databases">
        <authorList>
            <person name="Fleischmann R.D."/>
            <person name="Dodson R.J."/>
            <person name="Haft D.H."/>
            <person name="Merkel J.S."/>
            <person name="Nelson W.C."/>
            <person name="Fraser C.M."/>
        </authorList>
    </citation>
    <scope>NUCLEOTIDE SEQUENCE [LARGE SCALE GENOMIC DNA]</scope>
    <source>
        <strain>104</strain>
    </source>
</reference>
<dbReference type="EMBL" id="CP000479">
    <property type="protein sequence ID" value="ABK65907.1"/>
    <property type="molecule type" value="Genomic_DNA"/>
</dbReference>
<dbReference type="RefSeq" id="WP_011725660.1">
    <property type="nucleotide sequence ID" value="NC_008595.1"/>
</dbReference>
<dbReference type="SMR" id="A0QJ46"/>
<dbReference type="GeneID" id="75271155"/>
<dbReference type="KEGG" id="mav:MAV_3762"/>
<dbReference type="HOGENOM" id="CLU_077636_0_0_11"/>
<dbReference type="Proteomes" id="UP000001574">
    <property type="component" value="Chromosome"/>
</dbReference>
<dbReference type="GO" id="GO:0005737">
    <property type="term" value="C:cytoplasm"/>
    <property type="evidence" value="ECO:0007669"/>
    <property type="project" value="UniProtKB-SubCell"/>
</dbReference>
<dbReference type="GO" id="GO:0005840">
    <property type="term" value="C:ribosome"/>
    <property type="evidence" value="ECO:0007669"/>
    <property type="project" value="InterPro"/>
</dbReference>
<dbReference type="GO" id="GO:0043022">
    <property type="term" value="F:ribosome binding"/>
    <property type="evidence" value="ECO:0007669"/>
    <property type="project" value="InterPro"/>
</dbReference>
<dbReference type="GO" id="GO:0042274">
    <property type="term" value="P:ribosomal small subunit biogenesis"/>
    <property type="evidence" value="ECO:0007669"/>
    <property type="project" value="UniProtKB-UniRule"/>
</dbReference>
<dbReference type="GO" id="GO:0006364">
    <property type="term" value="P:rRNA processing"/>
    <property type="evidence" value="ECO:0007669"/>
    <property type="project" value="UniProtKB-UniRule"/>
</dbReference>
<dbReference type="Gene3D" id="2.30.30.240">
    <property type="entry name" value="PRC-barrel domain"/>
    <property type="match status" value="1"/>
</dbReference>
<dbReference type="Gene3D" id="2.40.30.60">
    <property type="entry name" value="RimM"/>
    <property type="match status" value="1"/>
</dbReference>
<dbReference type="HAMAP" id="MF_00014">
    <property type="entry name" value="Ribosome_mat_RimM"/>
    <property type="match status" value="1"/>
</dbReference>
<dbReference type="InterPro" id="IPR011033">
    <property type="entry name" value="PRC_barrel-like_sf"/>
</dbReference>
<dbReference type="InterPro" id="IPR056792">
    <property type="entry name" value="PRC_RimM"/>
</dbReference>
<dbReference type="InterPro" id="IPR011961">
    <property type="entry name" value="RimM"/>
</dbReference>
<dbReference type="InterPro" id="IPR002676">
    <property type="entry name" value="RimM_N"/>
</dbReference>
<dbReference type="InterPro" id="IPR036976">
    <property type="entry name" value="RimM_N_sf"/>
</dbReference>
<dbReference type="InterPro" id="IPR009000">
    <property type="entry name" value="Transl_B-barrel_sf"/>
</dbReference>
<dbReference type="NCBIfam" id="TIGR02273">
    <property type="entry name" value="16S_RimM"/>
    <property type="match status" value="1"/>
</dbReference>
<dbReference type="PANTHER" id="PTHR33692">
    <property type="entry name" value="RIBOSOME MATURATION FACTOR RIMM"/>
    <property type="match status" value="1"/>
</dbReference>
<dbReference type="PANTHER" id="PTHR33692:SF1">
    <property type="entry name" value="RIBOSOME MATURATION FACTOR RIMM"/>
    <property type="match status" value="1"/>
</dbReference>
<dbReference type="Pfam" id="PF24986">
    <property type="entry name" value="PRC_RimM"/>
    <property type="match status" value="1"/>
</dbReference>
<dbReference type="Pfam" id="PF01782">
    <property type="entry name" value="RimM"/>
    <property type="match status" value="1"/>
</dbReference>
<dbReference type="SUPFAM" id="SSF50346">
    <property type="entry name" value="PRC-barrel domain"/>
    <property type="match status" value="1"/>
</dbReference>
<dbReference type="SUPFAM" id="SSF50447">
    <property type="entry name" value="Translation proteins"/>
    <property type="match status" value="1"/>
</dbReference>
<evidence type="ECO:0000255" key="1">
    <source>
        <dbReference type="HAMAP-Rule" id="MF_00014"/>
    </source>
</evidence>
<feature type="chain" id="PRO_1000001195" description="Ribosome maturation factor RimM">
    <location>
        <begin position="1"/>
        <end position="175"/>
    </location>
</feature>
<feature type="domain" description="PRC barrel" evidence="1">
    <location>
        <begin position="96"/>
        <end position="172"/>
    </location>
</feature>
<accession>A0QJ46</accession>
<protein>
    <recommendedName>
        <fullName evidence="1">Ribosome maturation factor RimM</fullName>
    </recommendedName>
</protein>
<name>RIMM_MYCA1</name>